<organism>
    <name type="scientific">Nostoc sp. (strain PCC 7120 / SAG 25.82 / UTEX 2576)</name>
    <dbReference type="NCBI Taxonomy" id="103690"/>
    <lineage>
        <taxon>Bacteria</taxon>
        <taxon>Bacillati</taxon>
        <taxon>Cyanobacteriota</taxon>
        <taxon>Cyanophyceae</taxon>
        <taxon>Nostocales</taxon>
        <taxon>Nostocaceae</taxon>
        <taxon>Nostoc</taxon>
    </lineage>
</organism>
<protein>
    <recommendedName>
        <fullName evidence="1">Small ribosomal subunit protein uS14</fullName>
    </recommendedName>
    <alternativeName>
        <fullName evidence="2">30S ribosomal protein S14</fullName>
    </alternativeName>
</protein>
<evidence type="ECO:0000255" key="1">
    <source>
        <dbReference type="HAMAP-Rule" id="MF_00537"/>
    </source>
</evidence>
<evidence type="ECO:0000305" key="2"/>
<sequence>MAKKSMIEREKKRAKLVEKYSEKREALLEEFRTTESPLEKLEIHRQIQQLPRNSAPNRRRNRCWVTGRPRGVYRDFGLSRNVLREWAHEGLLPGVVKSSW</sequence>
<reference key="1">
    <citation type="journal article" date="2001" name="DNA Res.">
        <title>Complete genomic sequence of the filamentous nitrogen-fixing cyanobacterium Anabaena sp. strain PCC 7120.</title>
        <authorList>
            <person name="Kaneko T."/>
            <person name="Nakamura Y."/>
            <person name="Wolk C.P."/>
            <person name="Kuritz T."/>
            <person name="Sasamoto S."/>
            <person name="Watanabe A."/>
            <person name="Iriguchi M."/>
            <person name="Ishikawa A."/>
            <person name="Kawashima K."/>
            <person name="Kimura T."/>
            <person name="Kishida Y."/>
            <person name="Kohara M."/>
            <person name="Matsumoto M."/>
            <person name="Matsuno A."/>
            <person name="Muraki A."/>
            <person name="Nakazaki N."/>
            <person name="Shimpo S."/>
            <person name="Sugimoto M."/>
            <person name="Takazawa M."/>
            <person name="Yamada M."/>
            <person name="Yasuda M."/>
            <person name="Tabata S."/>
        </authorList>
    </citation>
    <scope>NUCLEOTIDE SEQUENCE [LARGE SCALE GENOMIC DNA]</scope>
    <source>
        <strain>PCC 7120 / SAG 25.82 / UTEX 2576</strain>
    </source>
</reference>
<comment type="function">
    <text evidence="1">Binds 16S rRNA, required for the assembly of 30S particles and may also be responsible for determining the conformation of the 16S rRNA at the A site.</text>
</comment>
<comment type="subunit">
    <text evidence="1">Part of the 30S ribosomal subunit. Contacts proteins S3 and S10.</text>
</comment>
<comment type="similarity">
    <text evidence="1">Belongs to the universal ribosomal protein uS14 family.</text>
</comment>
<name>RS14_NOSS1</name>
<proteinExistence type="inferred from homology"/>
<dbReference type="EMBL" id="BA000019">
    <property type="protein sequence ID" value="BAB75668.1"/>
    <property type="molecule type" value="Genomic_DNA"/>
</dbReference>
<dbReference type="PIR" id="AB2302">
    <property type="entry name" value="AB2302"/>
</dbReference>
<dbReference type="RefSeq" id="WP_010998110.1">
    <property type="nucleotide sequence ID" value="NZ_RSCN01000045.1"/>
</dbReference>
<dbReference type="SMR" id="Q8YQ66"/>
<dbReference type="STRING" id="103690.gene:10496011"/>
<dbReference type="KEGG" id="ana:all3969"/>
<dbReference type="eggNOG" id="COG0199">
    <property type="taxonomic scope" value="Bacteria"/>
</dbReference>
<dbReference type="OrthoDB" id="9810484at2"/>
<dbReference type="Proteomes" id="UP000002483">
    <property type="component" value="Chromosome"/>
</dbReference>
<dbReference type="GO" id="GO:0005737">
    <property type="term" value="C:cytoplasm"/>
    <property type="evidence" value="ECO:0007669"/>
    <property type="project" value="UniProtKB-ARBA"/>
</dbReference>
<dbReference type="GO" id="GO:0015935">
    <property type="term" value="C:small ribosomal subunit"/>
    <property type="evidence" value="ECO:0007669"/>
    <property type="project" value="TreeGrafter"/>
</dbReference>
<dbReference type="GO" id="GO:0019843">
    <property type="term" value="F:rRNA binding"/>
    <property type="evidence" value="ECO:0007669"/>
    <property type="project" value="UniProtKB-UniRule"/>
</dbReference>
<dbReference type="GO" id="GO:0003735">
    <property type="term" value="F:structural constituent of ribosome"/>
    <property type="evidence" value="ECO:0007669"/>
    <property type="project" value="InterPro"/>
</dbReference>
<dbReference type="GO" id="GO:0006412">
    <property type="term" value="P:translation"/>
    <property type="evidence" value="ECO:0007669"/>
    <property type="project" value="UniProtKB-UniRule"/>
</dbReference>
<dbReference type="FunFam" id="1.10.287.1480:FF:000001">
    <property type="entry name" value="30S ribosomal protein S14"/>
    <property type="match status" value="1"/>
</dbReference>
<dbReference type="Gene3D" id="1.10.287.1480">
    <property type="match status" value="1"/>
</dbReference>
<dbReference type="HAMAP" id="MF_00537">
    <property type="entry name" value="Ribosomal_uS14_1"/>
    <property type="match status" value="1"/>
</dbReference>
<dbReference type="InterPro" id="IPR001209">
    <property type="entry name" value="Ribosomal_uS14"/>
</dbReference>
<dbReference type="InterPro" id="IPR023036">
    <property type="entry name" value="Ribosomal_uS14_bac/plastid"/>
</dbReference>
<dbReference type="InterPro" id="IPR018271">
    <property type="entry name" value="Ribosomal_uS14_CS"/>
</dbReference>
<dbReference type="NCBIfam" id="NF006477">
    <property type="entry name" value="PRK08881.1"/>
    <property type="match status" value="1"/>
</dbReference>
<dbReference type="PANTHER" id="PTHR19836">
    <property type="entry name" value="30S RIBOSOMAL PROTEIN S14"/>
    <property type="match status" value="1"/>
</dbReference>
<dbReference type="PANTHER" id="PTHR19836:SF19">
    <property type="entry name" value="SMALL RIBOSOMAL SUBUNIT PROTEIN US14M"/>
    <property type="match status" value="1"/>
</dbReference>
<dbReference type="Pfam" id="PF00253">
    <property type="entry name" value="Ribosomal_S14"/>
    <property type="match status" value="1"/>
</dbReference>
<dbReference type="SUPFAM" id="SSF57716">
    <property type="entry name" value="Glucocorticoid receptor-like (DNA-binding domain)"/>
    <property type="match status" value="1"/>
</dbReference>
<dbReference type="PROSITE" id="PS00527">
    <property type="entry name" value="RIBOSOMAL_S14"/>
    <property type="match status" value="1"/>
</dbReference>
<accession>Q8YQ66</accession>
<keyword id="KW-1185">Reference proteome</keyword>
<keyword id="KW-0687">Ribonucleoprotein</keyword>
<keyword id="KW-0689">Ribosomal protein</keyword>
<keyword id="KW-0694">RNA-binding</keyword>
<keyword id="KW-0699">rRNA-binding</keyword>
<gene>
    <name evidence="1" type="primary">rpsN</name>
    <name evidence="1" type="synonym">rps14</name>
    <name type="ordered locus">all3969</name>
</gene>
<feature type="chain" id="PRO_0000130867" description="Small ribosomal subunit protein uS14">
    <location>
        <begin position="1"/>
        <end position="100"/>
    </location>
</feature>